<proteinExistence type="inferred from homology"/>
<sequence>MGLSPVNIFKPFGLGRAKAVIAAVSGGSDSLGLLFLLKDYLSTLESPPVLIAVTVDHKLRAESALEAENVGLLCQKHGIMHCVLSWDDPKPAHGLAAAARTARYRLLVQAARDAGAGFIVTGHTENDQIETFLMRKARSGHCEARGLAAMSPRSLLEGSVELARPLLTVSRQALRDELTRRGIAWVDDPSNANIDYERPRVRLGVAAEADGQEVLEQIAQAGAARERNNAALVEALADPATLGVDAAGMMFLNADCYAALSPGARQLFSGLLASIAGGRRFLPGDGERRRIERMLSGQDAPRRLTVFGALIERGEKGAPHRFRRERRNLPKLDLVPGQHIVWDGRFCFFNSGGRSFEIAPPGRQELIDFLKNSGRDIESRRCEALLISPALYEGGKLAFVPFLPGAEWPQGVHIERHFAIFDHVLPGHDFALAQAVEARLGRACAEIS</sequence>
<dbReference type="EC" id="6.3.4.19" evidence="1"/>
<dbReference type="EMBL" id="CP001488">
    <property type="protein sequence ID" value="ACO01427.1"/>
    <property type="molecule type" value="Genomic_DNA"/>
</dbReference>
<dbReference type="RefSeq" id="WP_004686307.1">
    <property type="nucleotide sequence ID" value="NC_012441.1"/>
</dbReference>
<dbReference type="SMR" id="C0REV5"/>
<dbReference type="GeneID" id="29593097"/>
<dbReference type="KEGG" id="bmi:BMEA_A1745"/>
<dbReference type="HOGENOM" id="CLU_018869_3_3_5"/>
<dbReference type="Proteomes" id="UP000001748">
    <property type="component" value="Chromosome I"/>
</dbReference>
<dbReference type="GO" id="GO:0005737">
    <property type="term" value="C:cytoplasm"/>
    <property type="evidence" value="ECO:0007669"/>
    <property type="project" value="UniProtKB-SubCell"/>
</dbReference>
<dbReference type="GO" id="GO:0005524">
    <property type="term" value="F:ATP binding"/>
    <property type="evidence" value="ECO:0007669"/>
    <property type="project" value="UniProtKB-UniRule"/>
</dbReference>
<dbReference type="GO" id="GO:0032267">
    <property type="term" value="F:tRNA(Ile)-lysidine synthase activity"/>
    <property type="evidence" value="ECO:0007669"/>
    <property type="project" value="UniProtKB-EC"/>
</dbReference>
<dbReference type="GO" id="GO:0006400">
    <property type="term" value="P:tRNA modification"/>
    <property type="evidence" value="ECO:0007669"/>
    <property type="project" value="UniProtKB-UniRule"/>
</dbReference>
<dbReference type="CDD" id="cd01992">
    <property type="entry name" value="TilS_N"/>
    <property type="match status" value="1"/>
</dbReference>
<dbReference type="Gene3D" id="3.40.50.620">
    <property type="entry name" value="HUPs"/>
    <property type="match status" value="1"/>
</dbReference>
<dbReference type="HAMAP" id="MF_01161">
    <property type="entry name" value="tRNA_Ile_lys_synt"/>
    <property type="match status" value="1"/>
</dbReference>
<dbReference type="InterPro" id="IPR014729">
    <property type="entry name" value="Rossmann-like_a/b/a_fold"/>
</dbReference>
<dbReference type="InterPro" id="IPR011063">
    <property type="entry name" value="TilS/TtcA_N"/>
</dbReference>
<dbReference type="InterPro" id="IPR012094">
    <property type="entry name" value="tRNA_Ile_lys_synt"/>
</dbReference>
<dbReference type="InterPro" id="IPR012795">
    <property type="entry name" value="tRNA_Ile_lys_synt_N"/>
</dbReference>
<dbReference type="NCBIfam" id="TIGR02432">
    <property type="entry name" value="lysidine_TilS_N"/>
    <property type="match status" value="1"/>
</dbReference>
<dbReference type="PANTHER" id="PTHR43033">
    <property type="entry name" value="TRNA(ILE)-LYSIDINE SYNTHASE-RELATED"/>
    <property type="match status" value="1"/>
</dbReference>
<dbReference type="PANTHER" id="PTHR43033:SF1">
    <property type="entry name" value="TRNA(ILE)-LYSIDINE SYNTHASE-RELATED"/>
    <property type="match status" value="1"/>
</dbReference>
<dbReference type="Pfam" id="PF01171">
    <property type="entry name" value="ATP_bind_3"/>
    <property type="match status" value="1"/>
</dbReference>
<dbReference type="SUPFAM" id="SSF52402">
    <property type="entry name" value="Adenine nucleotide alpha hydrolases-like"/>
    <property type="match status" value="1"/>
</dbReference>
<organism>
    <name type="scientific">Brucella melitensis biotype 2 (strain ATCC 23457)</name>
    <dbReference type="NCBI Taxonomy" id="546272"/>
    <lineage>
        <taxon>Bacteria</taxon>
        <taxon>Pseudomonadati</taxon>
        <taxon>Pseudomonadota</taxon>
        <taxon>Alphaproteobacteria</taxon>
        <taxon>Hyphomicrobiales</taxon>
        <taxon>Brucellaceae</taxon>
        <taxon>Brucella/Ochrobactrum group</taxon>
        <taxon>Brucella</taxon>
    </lineage>
</organism>
<protein>
    <recommendedName>
        <fullName evidence="1">tRNA(Ile)-lysidine synthase</fullName>
        <ecNumber evidence="1">6.3.4.19</ecNumber>
    </recommendedName>
    <alternativeName>
        <fullName evidence="1">tRNA(Ile)-2-lysyl-cytidine synthase</fullName>
    </alternativeName>
    <alternativeName>
        <fullName evidence="1">tRNA(Ile)-lysidine synthetase</fullName>
    </alternativeName>
</protein>
<reference key="1">
    <citation type="submission" date="2009-03" db="EMBL/GenBank/DDBJ databases">
        <title>Brucella melitensis ATCC 23457 whole genome shotgun sequencing project.</title>
        <authorList>
            <person name="Setubal J.C."/>
            <person name="Boyle S."/>
            <person name="Crasta O.R."/>
            <person name="Gillespie J.J."/>
            <person name="Kenyon R.W."/>
            <person name="Lu J."/>
            <person name="Mane S."/>
            <person name="Nagrani S."/>
            <person name="Shallom J.M."/>
            <person name="Shallom S."/>
            <person name="Shukla M."/>
            <person name="Snyder E.E."/>
            <person name="Sobral B.W."/>
            <person name="Wattam A.R."/>
            <person name="Will R."/>
            <person name="Williams K."/>
            <person name="Yoo H."/>
            <person name="Munk C."/>
            <person name="Tapia R."/>
            <person name="Han C."/>
            <person name="Detter J.C."/>
            <person name="Bruce D."/>
            <person name="Brettin T.S."/>
        </authorList>
    </citation>
    <scope>NUCLEOTIDE SEQUENCE [LARGE SCALE GENOMIC DNA]</scope>
    <source>
        <strain>ATCC 23457</strain>
    </source>
</reference>
<feature type="chain" id="PRO_1000164318" description="tRNA(Ile)-lysidine synthase">
    <location>
        <begin position="1"/>
        <end position="448"/>
    </location>
</feature>
<feature type="binding site" evidence="1">
    <location>
        <begin position="25"/>
        <end position="30"/>
    </location>
    <ligand>
        <name>ATP</name>
        <dbReference type="ChEBI" id="CHEBI:30616"/>
    </ligand>
</feature>
<name>TILS_BRUMB</name>
<keyword id="KW-0067">ATP-binding</keyword>
<keyword id="KW-0963">Cytoplasm</keyword>
<keyword id="KW-0436">Ligase</keyword>
<keyword id="KW-0547">Nucleotide-binding</keyword>
<keyword id="KW-0819">tRNA processing</keyword>
<gene>
    <name evidence="1" type="primary">tilS</name>
    <name type="ordered locus">BMEA_A1745</name>
</gene>
<comment type="function">
    <text evidence="1">Ligates lysine onto the cytidine present at position 34 of the AUA codon-specific tRNA(Ile) that contains the anticodon CAU, in an ATP-dependent manner. Cytidine is converted to lysidine, thus changing the amino acid specificity of the tRNA from methionine to isoleucine.</text>
</comment>
<comment type="catalytic activity">
    <reaction evidence="1">
        <text>cytidine(34) in tRNA(Ile2) + L-lysine + ATP = lysidine(34) in tRNA(Ile2) + AMP + diphosphate + H(+)</text>
        <dbReference type="Rhea" id="RHEA:43744"/>
        <dbReference type="Rhea" id="RHEA-COMP:10625"/>
        <dbReference type="Rhea" id="RHEA-COMP:10670"/>
        <dbReference type="ChEBI" id="CHEBI:15378"/>
        <dbReference type="ChEBI" id="CHEBI:30616"/>
        <dbReference type="ChEBI" id="CHEBI:32551"/>
        <dbReference type="ChEBI" id="CHEBI:33019"/>
        <dbReference type="ChEBI" id="CHEBI:82748"/>
        <dbReference type="ChEBI" id="CHEBI:83665"/>
        <dbReference type="ChEBI" id="CHEBI:456215"/>
        <dbReference type="EC" id="6.3.4.19"/>
    </reaction>
</comment>
<comment type="subcellular location">
    <subcellularLocation>
        <location evidence="1">Cytoplasm</location>
    </subcellularLocation>
</comment>
<comment type="domain">
    <text>The N-terminal region contains the highly conserved SGGXDS motif, predicted to be a P-loop motif involved in ATP binding.</text>
</comment>
<comment type="similarity">
    <text evidence="1">Belongs to the tRNA(Ile)-lysidine synthase family.</text>
</comment>
<evidence type="ECO:0000255" key="1">
    <source>
        <dbReference type="HAMAP-Rule" id="MF_01161"/>
    </source>
</evidence>
<accession>C0REV5</accession>